<sequence length="219" mass="25031">MLLFRAASLLPLLCFTVGAFPFMDEEGSGSFAQEVLHSRSYPLANAHRGPFVDLPLFRQNRRKISQNFILHSDPREHMDEEALRRKLVWESAIRREKMRSHPDQVLPIGQDALKRSRCHALPFIQNVFRKNCFPVRLPNKFCFGQCNSFYVPGWPAGLSQPCTSCAPSRSRRISLPLRCRAGHLAWQEVELVEECECETRYDRNTVEPAGSGEGFLPVS</sequence>
<protein>
    <recommendedName>
        <fullName>DAN domain family member 5</fullName>
    </recommendedName>
    <alternativeName>
        <fullName>Cerberus-like 2 protein</fullName>
        <shortName>Cerl-2</shortName>
    </alternativeName>
</protein>
<comment type="function">
    <text evidence="1">Plays an important role in regulating the left-right axis by blocking a tgfb1 cascade in the right posterior paraxial mesoderm. Functions as an inhibitor of bmp, tgfb1, nodal, activin and wnt signaling in the ectoderm. May inhibit mesodermal signals, probably through an inhibition of nodal/activin pathways. Seems to regulates cell fate specification and competence before the onset of neural induction. Expression in the entire ectodermal region prior to gastrulation might act to prevent fate specification in the ectoderm and ensure the maintenance of the stem-cell-like properties exhibited by ectodermal cells (By similarity).</text>
</comment>
<comment type="subunit">
    <text evidence="1">Interacts with nr1-a.</text>
</comment>
<comment type="subcellular location">
    <subcellularLocation>
        <location evidence="4">Secreted</location>
    </subcellularLocation>
</comment>
<comment type="induction">
    <text evidence="1">Down-regulation during the establishment of embryonic left-right axis could be due to translation repression involving BICC1 and DICER1. Subsequently transcripts are degraded in a DICER1-dependent manner. Attenuated DAND5 expression lifts repression of NODAL and defines leftness by induction of the left lateral plate mesoderm NODAL signaling cascade.</text>
</comment>
<comment type="similarity">
    <text evidence="4">Belongs to the DAN family.</text>
</comment>
<name>DAND5_XENTR</name>
<accession>Q28H35</accession>
<accession>Q28GV2</accession>
<reference key="1">
    <citation type="submission" date="2006-10" db="EMBL/GenBank/DDBJ databases">
        <authorList>
            <consortium name="Sanger Xenopus tropicalis EST/cDNA project"/>
        </authorList>
    </citation>
    <scope>NUCLEOTIDE SEQUENCE [LARGE SCALE MRNA]</scope>
    <source>
        <tissue>Egg</tissue>
    </source>
</reference>
<feature type="signal peptide" evidence="2">
    <location>
        <begin position="1"/>
        <end position="19"/>
    </location>
</feature>
<feature type="chain" id="PRO_0000311807" description="DAN domain family member 5">
    <location>
        <begin position="20"/>
        <end position="219"/>
    </location>
</feature>
<feature type="domain" description="CTCK" evidence="3">
    <location>
        <begin position="118"/>
        <end position="198"/>
    </location>
</feature>
<feature type="disulfide bond" evidence="3">
    <location>
        <begin position="118"/>
        <end position="165"/>
    </location>
</feature>
<feature type="disulfide bond" evidence="3">
    <location>
        <begin position="132"/>
        <end position="179"/>
    </location>
</feature>
<feature type="disulfide bond" evidence="3">
    <location>
        <begin position="142"/>
        <end position="195"/>
    </location>
</feature>
<feature type="disulfide bond" evidence="3">
    <location>
        <begin position="146"/>
        <end position="197"/>
    </location>
</feature>
<feature type="sequence conflict" description="In Ref. 1; CAJ81707." evidence="4" ref="1">
    <original>D</original>
    <variation>N</variation>
    <location>
        <position position="24"/>
    </location>
</feature>
<organism>
    <name type="scientific">Xenopus tropicalis</name>
    <name type="common">Western clawed frog</name>
    <name type="synonym">Silurana tropicalis</name>
    <dbReference type="NCBI Taxonomy" id="8364"/>
    <lineage>
        <taxon>Eukaryota</taxon>
        <taxon>Metazoa</taxon>
        <taxon>Chordata</taxon>
        <taxon>Craniata</taxon>
        <taxon>Vertebrata</taxon>
        <taxon>Euteleostomi</taxon>
        <taxon>Amphibia</taxon>
        <taxon>Batrachia</taxon>
        <taxon>Anura</taxon>
        <taxon>Pipoidea</taxon>
        <taxon>Pipidae</taxon>
        <taxon>Xenopodinae</taxon>
        <taxon>Xenopus</taxon>
        <taxon>Silurana</taxon>
    </lineage>
</organism>
<keyword id="KW-1015">Disulfide bond</keyword>
<keyword id="KW-1185">Reference proteome</keyword>
<keyword id="KW-0964">Secreted</keyword>
<keyword id="KW-0732">Signal</keyword>
<proteinExistence type="evidence at transcript level"/>
<gene>
    <name type="primary">dand5</name>
    <name type="synonym">cerl2</name>
    <name type="synonym">coco</name>
    <name type="ORF">TEgg007d24.1</name>
    <name type="ORF">TEgg050n09.1</name>
</gene>
<evidence type="ECO:0000250" key="1">
    <source>
        <dbReference type="UniProtKB" id="Q800X4"/>
    </source>
</evidence>
<evidence type="ECO:0000255" key="2"/>
<evidence type="ECO:0000255" key="3">
    <source>
        <dbReference type="PROSITE-ProRule" id="PRU00039"/>
    </source>
</evidence>
<evidence type="ECO:0000305" key="4"/>
<dbReference type="EMBL" id="CR761214">
    <property type="protein sequence ID" value="CAJ81707.1"/>
    <property type="molecule type" value="mRNA"/>
</dbReference>
<dbReference type="EMBL" id="CR761079">
    <property type="protein sequence ID" value="CAJ82131.1"/>
    <property type="molecule type" value="mRNA"/>
</dbReference>
<dbReference type="RefSeq" id="NP_001037924.1">
    <property type="nucleotide sequence ID" value="NM_001044459.1"/>
</dbReference>
<dbReference type="RefSeq" id="NP_001037962.1">
    <property type="nucleotide sequence ID" value="NM_001044497.1"/>
</dbReference>
<dbReference type="GeneID" id="733727"/>
<dbReference type="KEGG" id="xtr:733727"/>
<dbReference type="AGR" id="Xenbase:XB-GENE-480809"/>
<dbReference type="CTD" id="199699"/>
<dbReference type="Xenbase" id="XB-GENE-480809">
    <property type="gene designation" value="dand5"/>
</dbReference>
<dbReference type="InParanoid" id="Q28H35"/>
<dbReference type="OrthoDB" id="10061784at2759"/>
<dbReference type="Proteomes" id="UP000008143">
    <property type="component" value="Chromosome 3"/>
</dbReference>
<dbReference type="GO" id="GO:0005576">
    <property type="term" value="C:extracellular region"/>
    <property type="evidence" value="ECO:0007669"/>
    <property type="project" value="UniProtKB-SubCell"/>
</dbReference>
<dbReference type="GO" id="GO:0048513">
    <property type="term" value="P:animal organ development"/>
    <property type="evidence" value="ECO:0007669"/>
    <property type="project" value="UniProtKB-ARBA"/>
</dbReference>
<dbReference type="GO" id="GO:0032926">
    <property type="term" value="P:negative regulation of activin receptor signaling pathway"/>
    <property type="evidence" value="ECO:0007669"/>
    <property type="project" value="UniProtKB-ARBA"/>
</dbReference>
<dbReference type="GO" id="GO:0003002">
    <property type="term" value="P:regionalization"/>
    <property type="evidence" value="ECO:0007669"/>
    <property type="project" value="UniProtKB-ARBA"/>
</dbReference>
<dbReference type="Gene3D" id="2.10.90.10">
    <property type="entry name" value="Cystine-knot cytokines"/>
    <property type="match status" value="1"/>
</dbReference>
<dbReference type="InterPro" id="IPR016860">
    <property type="entry name" value="Cerberus"/>
</dbReference>
<dbReference type="InterPro" id="IPR006207">
    <property type="entry name" value="Cys_knot_C"/>
</dbReference>
<dbReference type="InterPro" id="IPR029034">
    <property type="entry name" value="Cystine-knot_cytokine"/>
</dbReference>
<dbReference type="InterPro" id="IPR004133">
    <property type="entry name" value="DAN"/>
</dbReference>
<dbReference type="PANTHER" id="PTHR15273">
    <property type="entry name" value="DAN DOMAIN FAMILY MEMBER 5"/>
    <property type="match status" value="1"/>
</dbReference>
<dbReference type="PANTHER" id="PTHR15273:SF6">
    <property type="entry name" value="DAN DOMAIN FAMILY MEMBER 5"/>
    <property type="match status" value="1"/>
</dbReference>
<dbReference type="Pfam" id="PF03045">
    <property type="entry name" value="DAN"/>
    <property type="match status" value="1"/>
</dbReference>
<dbReference type="PIRSF" id="PIRSF027807">
    <property type="entry name" value="Cerberus"/>
    <property type="match status" value="1"/>
</dbReference>
<dbReference type="SMART" id="SM00041">
    <property type="entry name" value="CT"/>
    <property type="match status" value="1"/>
</dbReference>
<dbReference type="PROSITE" id="PS01225">
    <property type="entry name" value="CTCK_2"/>
    <property type="match status" value="1"/>
</dbReference>